<proteinExistence type="inferred from homology"/>
<reference key="1">
    <citation type="submission" date="2007-03" db="EMBL/GenBank/DDBJ databases">
        <title>Complete sequence of Desulfotomaculum reducens MI-1.</title>
        <authorList>
            <consortium name="US DOE Joint Genome Institute"/>
            <person name="Copeland A."/>
            <person name="Lucas S."/>
            <person name="Lapidus A."/>
            <person name="Barry K."/>
            <person name="Detter J.C."/>
            <person name="Glavina del Rio T."/>
            <person name="Hammon N."/>
            <person name="Israni S."/>
            <person name="Dalin E."/>
            <person name="Tice H."/>
            <person name="Pitluck S."/>
            <person name="Sims D."/>
            <person name="Brettin T."/>
            <person name="Bruce D."/>
            <person name="Han C."/>
            <person name="Tapia R."/>
            <person name="Schmutz J."/>
            <person name="Larimer F."/>
            <person name="Land M."/>
            <person name="Hauser L."/>
            <person name="Kyrpides N."/>
            <person name="Kim E."/>
            <person name="Tebo B.M."/>
            <person name="Richardson P."/>
        </authorList>
    </citation>
    <scope>NUCLEOTIDE SEQUENCE [LARGE SCALE GENOMIC DNA]</scope>
    <source>
        <strain>ATCC BAA-1160 / DSM 100696 / MI-1</strain>
    </source>
</reference>
<protein>
    <recommendedName>
        <fullName evidence="1">Porphobilinogen deaminase</fullName>
        <shortName evidence="1">PBG</shortName>
        <ecNumber evidence="1">2.5.1.61</ecNumber>
    </recommendedName>
    <alternativeName>
        <fullName evidence="1">Hydroxymethylbilane synthase</fullName>
        <shortName evidence="1">HMBS</shortName>
    </alternativeName>
    <alternativeName>
        <fullName evidence="1">Pre-uroporphyrinogen synthase</fullName>
    </alternativeName>
</protein>
<organism>
    <name type="scientific">Desulforamulus reducens (strain ATCC BAA-1160 / DSM 100696 / MI-1)</name>
    <name type="common">Desulfotomaculum reducens</name>
    <dbReference type="NCBI Taxonomy" id="349161"/>
    <lineage>
        <taxon>Bacteria</taxon>
        <taxon>Bacillati</taxon>
        <taxon>Bacillota</taxon>
        <taxon>Clostridia</taxon>
        <taxon>Eubacteriales</taxon>
        <taxon>Peptococcaceae</taxon>
        <taxon>Desulforamulus</taxon>
    </lineage>
</organism>
<name>HEM3_DESRM</name>
<comment type="function">
    <text evidence="1">Tetrapolymerization of the monopyrrole PBG into the hydroxymethylbilane pre-uroporphyrinogen in several discrete steps.</text>
</comment>
<comment type="catalytic activity">
    <reaction evidence="1">
        <text>4 porphobilinogen + H2O = hydroxymethylbilane + 4 NH4(+)</text>
        <dbReference type="Rhea" id="RHEA:13185"/>
        <dbReference type="ChEBI" id="CHEBI:15377"/>
        <dbReference type="ChEBI" id="CHEBI:28938"/>
        <dbReference type="ChEBI" id="CHEBI:57845"/>
        <dbReference type="ChEBI" id="CHEBI:58126"/>
        <dbReference type="EC" id="2.5.1.61"/>
    </reaction>
</comment>
<comment type="cofactor">
    <cofactor evidence="1">
        <name>dipyrromethane</name>
        <dbReference type="ChEBI" id="CHEBI:60342"/>
    </cofactor>
    <text evidence="1">Binds 1 dipyrromethane group covalently.</text>
</comment>
<comment type="pathway">
    <text evidence="1">Porphyrin-containing compound metabolism; protoporphyrin-IX biosynthesis; coproporphyrinogen-III from 5-aminolevulinate: step 2/4.</text>
</comment>
<comment type="subunit">
    <text evidence="1">Monomer.</text>
</comment>
<comment type="miscellaneous">
    <text evidence="1">The porphobilinogen subunits are added to the dipyrromethane group.</text>
</comment>
<comment type="similarity">
    <text evidence="1">Belongs to the HMBS family.</text>
</comment>
<accession>A4J6H7</accession>
<evidence type="ECO:0000255" key="1">
    <source>
        <dbReference type="HAMAP-Rule" id="MF_00260"/>
    </source>
</evidence>
<keyword id="KW-0627">Porphyrin biosynthesis</keyword>
<keyword id="KW-1185">Reference proteome</keyword>
<keyword id="KW-0808">Transferase</keyword>
<dbReference type="EC" id="2.5.1.61" evidence="1"/>
<dbReference type="EMBL" id="CP000612">
    <property type="protein sequence ID" value="ABO50680.1"/>
    <property type="molecule type" value="Genomic_DNA"/>
</dbReference>
<dbReference type="RefSeq" id="WP_011878482.1">
    <property type="nucleotide sequence ID" value="NC_009253.1"/>
</dbReference>
<dbReference type="SMR" id="A4J6H7"/>
<dbReference type="STRING" id="349161.Dred_2163"/>
<dbReference type="KEGG" id="drm:Dred_2163"/>
<dbReference type="eggNOG" id="COG0181">
    <property type="taxonomic scope" value="Bacteria"/>
</dbReference>
<dbReference type="HOGENOM" id="CLU_019704_0_2_9"/>
<dbReference type="OrthoDB" id="9810298at2"/>
<dbReference type="UniPathway" id="UPA00251">
    <property type="reaction ID" value="UER00319"/>
</dbReference>
<dbReference type="Proteomes" id="UP000001556">
    <property type="component" value="Chromosome"/>
</dbReference>
<dbReference type="GO" id="GO:0005737">
    <property type="term" value="C:cytoplasm"/>
    <property type="evidence" value="ECO:0007669"/>
    <property type="project" value="TreeGrafter"/>
</dbReference>
<dbReference type="GO" id="GO:0004418">
    <property type="term" value="F:hydroxymethylbilane synthase activity"/>
    <property type="evidence" value="ECO:0007669"/>
    <property type="project" value="UniProtKB-UniRule"/>
</dbReference>
<dbReference type="GO" id="GO:0006782">
    <property type="term" value="P:protoporphyrinogen IX biosynthetic process"/>
    <property type="evidence" value="ECO:0007669"/>
    <property type="project" value="UniProtKB-UniRule"/>
</dbReference>
<dbReference type="CDD" id="cd13646">
    <property type="entry name" value="PBP2_EcHMBS_like"/>
    <property type="match status" value="1"/>
</dbReference>
<dbReference type="FunFam" id="3.30.160.40:FF:000002">
    <property type="entry name" value="Porphobilinogen deaminase"/>
    <property type="match status" value="1"/>
</dbReference>
<dbReference type="FunFam" id="3.40.190.10:FF:000004">
    <property type="entry name" value="Porphobilinogen deaminase"/>
    <property type="match status" value="1"/>
</dbReference>
<dbReference type="FunFam" id="3.40.190.10:FF:000005">
    <property type="entry name" value="Porphobilinogen deaminase"/>
    <property type="match status" value="1"/>
</dbReference>
<dbReference type="Gene3D" id="3.40.190.10">
    <property type="entry name" value="Periplasmic binding protein-like II"/>
    <property type="match status" value="2"/>
</dbReference>
<dbReference type="Gene3D" id="3.30.160.40">
    <property type="entry name" value="Porphobilinogen deaminase, C-terminal domain"/>
    <property type="match status" value="1"/>
</dbReference>
<dbReference type="HAMAP" id="MF_00260">
    <property type="entry name" value="Porphobil_deam"/>
    <property type="match status" value="1"/>
</dbReference>
<dbReference type="InterPro" id="IPR000860">
    <property type="entry name" value="HemC"/>
</dbReference>
<dbReference type="InterPro" id="IPR022419">
    <property type="entry name" value="Porphobilin_deaminase_cofac_BS"/>
</dbReference>
<dbReference type="InterPro" id="IPR022417">
    <property type="entry name" value="Porphobilin_deaminase_N"/>
</dbReference>
<dbReference type="InterPro" id="IPR022418">
    <property type="entry name" value="Porphobilinogen_deaminase_C"/>
</dbReference>
<dbReference type="InterPro" id="IPR036803">
    <property type="entry name" value="Porphobilinogen_deaminase_C_sf"/>
</dbReference>
<dbReference type="NCBIfam" id="TIGR00212">
    <property type="entry name" value="hemC"/>
    <property type="match status" value="1"/>
</dbReference>
<dbReference type="PANTHER" id="PTHR11557">
    <property type="entry name" value="PORPHOBILINOGEN DEAMINASE"/>
    <property type="match status" value="1"/>
</dbReference>
<dbReference type="PANTHER" id="PTHR11557:SF0">
    <property type="entry name" value="PORPHOBILINOGEN DEAMINASE"/>
    <property type="match status" value="1"/>
</dbReference>
<dbReference type="Pfam" id="PF01379">
    <property type="entry name" value="Porphobil_deam"/>
    <property type="match status" value="1"/>
</dbReference>
<dbReference type="Pfam" id="PF03900">
    <property type="entry name" value="Porphobil_deamC"/>
    <property type="match status" value="1"/>
</dbReference>
<dbReference type="PIRSF" id="PIRSF001438">
    <property type="entry name" value="4pyrrol_synth_OHMeBilane_synth"/>
    <property type="match status" value="1"/>
</dbReference>
<dbReference type="PRINTS" id="PR00151">
    <property type="entry name" value="PORPHBDMNASE"/>
</dbReference>
<dbReference type="SUPFAM" id="SSF53850">
    <property type="entry name" value="Periplasmic binding protein-like II"/>
    <property type="match status" value="1"/>
</dbReference>
<dbReference type="SUPFAM" id="SSF54782">
    <property type="entry name" value="Porphobilinogen deaminase (hydroxymethylbilane synthase), C-terminal domain"/>
    <property type="match status" value="1"/>
</dbReference>
<dbReference type="PROSITE" id="PS00533">
    <property type="entry name" value="PORPHOBILINOGEN_DEAM"/>
    <property type="match status" value="1"/>
</dbReference>
<feature type="chain" id="PRO_1000078608" description="Porphobilinogen deaminase">
    <location>
        <begin position="1"/>
        <end position="309"/>
    </location>
</feature>
<feature type="modified residue" description="S-(dipyrrolylmethanemethyl)cysteine" evidence="1">
    <location>
        <position position="241"/>
    </location>
</feature>
<gene>
    <name evidence="1" type="primary">hemC</name>
    <name type="ordered locus">Dred_2163</name>
</gene>
<sequence length="309" mass="33894">MKHKITVGSRDSALALWQTRWVVEQLEKQNPDVTFEITTMKTKGDKMLDVALAKIGDKGLFTKELEVAMLQKEIDFAVHSLKDMPTALPEGLIIGAVCKRDNPGDALISKDGRKLDELPKGARIGTSSLRRCAQLLNYRPDFQLEALRGNLNTRMKKLVSEQLDGIILAAAGITRMGWEDMIAEIIPFQVCLPAVGQGAISVECREDDPEILNLLKGIEHTETKAATEAERSLLRYLEGGCQVPIGAHSEVKNNRLMLTAVVATLDGTKVIRAQGENEVNKAVELGIEVAEKLMAMGGKKILEEVRAGE</sequence>